<protein>
    <recommendedName>
        <fullName>Chemotactic signal transduction system substrate-binding protein CosB</fullName>
    </recommendedName>
    <alternativeName>
        <fullName>Compatible solute binding protein</fullName>
    </alternativeName>
</protein>
<organism>
    <name type="scientific">Halobacterium salinarum (strain ATCC 29341 / DSM 671 / R1)</name>
    <dbReference type="NCBI Taxonomy" id="478009"/>
    <lineage>
        <taxon>Archaea</taxon>
        <taxon>Methanobacteriati</taxon>
        <taxon>Methanobacteriota</taxon>
        <taxon>Stenosarchaea group</taxon>
        <taxon>Halobacteria</taxon>
        <taxon>Halobacteriales</taxon>
        <taxon>Halobacteriaceae</taxon>
        <taxon>Halobacterium</taxon>
        <taxon>Halobacterium salinarum NRC-34001</taxon>
    </lineage>
</organism>
<dbReference type="EMBL" id="AJ438169">
    <property type="protein sequence ID" value="CAD27275.1"/>
    <property type="molecule type" value="Genomic_DNA"/>
</dbReference>
<dbReference type="EMBL" id="AM774415">
    <property type="protein sequence ID" value="CAP14277.1"/>
    <property type="molecule type" value="Genomic_DNA"/>
</dbReference>
<dbReference type="PIR" id="G84327">
    <property type="entry name" value="G84327"/>
</dbReference>
<dbReference type="RefSeq" id="WP_010903285.1">
    <property type="nucleotide sequence ID" value="NC_010364.1"/>
</dbReference>
<dbReference type="SMR" id="B0R6A8"/>
<dbReference type="EnsemblBacteria" id="CAP14277">
    <property type="protein sequence ID" value="CAP14277"/>
    <property type="gene ID" value="OE_3476R"/>
</dbReference>
<dbReference type="KEGG" id="hsl:OE_3476R"/>
<dbReference type="HOGENOM" id="CLU_830558_0_0_2"/>
<dbReference type="PhylomeDB" id="B0R6A8"/>
<dbReference type="Proteomes" id="UP000001321">
    <property type="component" value="Chromosome"/>
</dbReference>
<dbReference type="GO" id="GO:0043190">
    <property type="term" value="C:ATP-binding cassette (ABC) transporter complex"/>
    <property type="evidence" value="ECO:0007669"/>
    <property type="project" value="InterPro"/>
</dbReference>
<dbReference type="GO" id="GO:0022857">
    <property type="term" value="F:transmembrane transporter activity"/>
    <property type="evidence" value="ECO:0007669"/>
    <property type="project" value="InterPro"/>
</dbReference>
<dbReference type="GO" id="GO:0006935">
    <property type="term" value="P:chemotaxis"/>
    <property type="evidence" value="ECO:0007669"/>
    <property type="project" value="UniProtKB-KW"/>
</dbReference>
<dbReference type="Gene3D" id="3.40.190.120">
    <property type="entry name" value="Osmoprotection protein (prox), domain 2"/>
    <property type="match status" value="1"/>
</dbReference>
<dbReference type="Gene3D" id="3.40.190.10">
    <property type="entry name" value="Periplasmic binding protein-like II"/>
    <property type="match status" value="1"/>
</dbReference>
<dbReference type="InterPro" id="IPR007210">
    <property type="entry name" value="ABC_Gly_betaine_transp_sub-bd"/>
</dbReference>
<dbReference type="Pfam" id="PF04069">
    <property type="entry name" value="OpuAC"/>
    <property type="match status" value="1"/>
</dbReference>
<dbReference type="SUPFAM" id="SSF53850">
    <property type="entry name" value="Periplasmic binding protein-like II"/>
    <property type="match status" value="1"/>
</dbReference>
<feature type="signal peptide" evidence="1">
    <location>
        <begin position="1"/>
        <end position="29"/>
    </location>
</feature>
<feature type="chain" id="PRO_0000428988" description="Chemotactic signal transduction system substrate-binding protein CosB">
    <location>
        <begin position="30"/>
        <end position="334"/>
    </location>
</feature>
<gene>
    <name type="primary">cosB</name>
    <name type="ordered locus">OE_3476R</name>
</gene>
<reference key="1">
    <citation type="journal article" date="2002" name="EMBO J.">
        <title>A novel mode of sensory transduction in archaea: binding protein-mediated chemotaxis towards osmoprotectants and amino acids.</title>
        <authorList>
            <person name="Kokoeva M.V."/>
            <person name="Storch K.F."/>
            <person name="Klein C."/>
            <person name="Oesterhelt D."/>
        </authorList>
    </citation>
    <scope>NUCLEOTIDE SEQUENCE [GENOMIC DNA]</scope>
    <scope>FUNCTION IN CHEMOTAXIS</scope>
    <scope>SUBCELLULAR LOCATION</scope>
    <scope>GENE NAME</scope>
    <source>
        <strain>R1 / S9</strain>
    </source>
</reference>
<reference key="2">
    <citation type="journal article" date="2008" name="Genomics">
        <title>Evolution in the laboratory: the genome of Halobacterium salinarum strain R1 compared to that of strain NRC-1.</title>
        <authorList>
            <person name="Pfeiffer F."/>
            <person name="Schuster S.C."/>
            <person name="Broicher A."/>
            <person name="Falb M."/>
            <person name="Palm P."/>
            <person name="Rodewald K."/>
            <person name="Ruepp A."/>
            <person name="Soppa J."/>
            <person name="Tittor J."/>
            <person name="Oesterhelt D."/>
        </authorList>
    </citation>
    <scope>NUCLEOTIDE SEQUENCE [LARGE SCALE GENOMIC DNA]</scope>
    <source>
        <strain>ATCC 29341 / DSM 671 / R1</strain>
    </source>
</reference>
<name>COSB_HALS3</name>
<proteinExistence type="evidence at protein level"/>
<accession>B0R6A8</accession>
<accession>F2Z6F0</accession>
<evidence type="ECO:0000255" key="1"/>
<evidence type="ECO:0000269" key="2">
    <source>
    </source>
</evidence>
<evidence type="ECO:0000305" key="3"/>
<evidence type="ECO:0000305" key="4">
    <source>
    </source>
</evidence>
<sequence>MMDTPEHASTSSRRQLLGMLAAGGTTAVAGCTTITGGGDTTSTGGGDSGSSSIVVGSKGYGEQVTLGYVAYELLANTTNATLVDETGFGGNAAISEAYRTGNVHAYYDYMGSLWSSHPPKHDSADFDTPDAQYDALKSEMESEHPIRILDRADWQNTWAVFVAERAVEGTGIQSISDLAAHVNSRNYDIRPAFGDGFRSRSDGLDALLDYYEFDPERVTAWASEREFLETASAQAAGTAVDEGYADLGVGYSTSAWLTDVDSVRVLDDDRNFWPFFHPVGVVHEDVATDAVVAALNTMPDAIPDAETMQALNSRAAASGNQQAAADHLQNNDFI</sequence>
<keyword id="KW-1003">Cell membrane</keyword>
<keyword id="KW-0145">Chemotaxis</keyword>
<keyword id="KW-0472">Membrane</keyword>
<keyword id="KW-0732">Signal</keyword>
<comment type="function">
    <text evidence="2">Mediates chemotaxis towards compatible osmolytes. May function as a receptor that binds the osmolytes and transduces a signal to CosT. Has probably no additional role in transport.</text>
</comment>
<comment type="subcellular location">
    <subcellularLocation>
        <location evidence="4">Cell membrane</location>
        <topology evidence="4">Peripheral membrane protein</topology>
        <orientation evidence="4">Extracellular side</orientation>
    </subcellularLocation>
    <text>Probably anchored to the membrane by lipids.</text>
</comment>
<comment type="similarity">
    <text evidence="3">Belongs to the OsmX family.</text>
</comment>